<accession>Q7A1F4</accession>
<sequence length="77" mass="8399">MHTFLIVLLIIDCIALITVVLLQEGKSSGLSGAISGGAEQLFGKQKQRGVDLFLNRLTIILSILFFVLMICISYLGM</sequence>
<name>SECG_STAAW</name>
<gene>
    <name type="primary">secG</name>
    <name type="ordered locus">MW0740</name>
</gene>
<reference key="1">
    <citation type="journal article" date="2002" name="Lancet">
        <title>Genome and virulence determinants of high virulence community-acquired MRSA.</title>
        <authorList>
            <person name="Baba T."/>
            <person name="Takeuchi F."/>
            <person name="Kuroda M."/>
            <person name="Yuzawa H."/>
            <person name="Aoki K."/>
            <person name="Oguchi A."/>
            <person name="Nagai Y."/>
            <person name="Iwama N."/>
            <person name="Asano K."/>
            <person name="Naimi T."/>
            <person name="Kuroda H."/>
            <person name="Cui L."/>
            <person name="Yamamoto K."/>
            <person name="Hiramatsu K."/>
        </authorList>
    </citation>
    <scope>NUCLEOTIDE SEQUENCE [LARGE SCALE GENOMIC DNA]</scope>
    <source>
        <strain>MW2</strain>
    </source>
</reference>
<evidence type="ECO:0000250" key="1"/>
<evidence type="ECO:0000255" key="2"/>
<evidence type="ECO:0000305" key="3"/>
<comment type="function">
    <text evidence="1">Involved in protein export. Participates in an early event of protein translocation (By similarity).</text>
</comment>
<comment type="subcellular location">
    <subcellularLocation>
        <location evidence="1">Cell membrane</location>
        <topology evidence="1">Multi-pass membrane protein</topology>
    </subcellularLocation>
</comment>
<comment type="similarity">
    <text evidence="3">Belongs to the SecG family.</text>
</comment>
<proteinExistence type="inferred from homology"/>
<keyword id="KW-1003">Cell membrane</keyword>
<keyword id="KW-0472">Membrane</keyword>
<keyword id="KW-0653">Protein transport</keyword>
<keyword id="KW-0811">Translocation</keyword>
<keyword id="KW-0812">Transmembrane</keyword>
<keyword id="KW-1133">Transmembrane helix</keyword>
<keyword id="KW-0813">Transport</keyword>
<protein>
    <recommendedName>
        <fullName>Probable protein-export membrane protein SecG</fullName>
    </recommendedName>
</protein>
<organism>
    <name type="scientific">Staphylococcus aureus (strain MW2)</name>
    <dbReference type="NCBI Taxonomy" id="196620"/>
    <lineage>
        <taxon>Bacteria</taxon>
        <taxon>Bacillati</taxon>
        <taxon>Bacillota</taxon>
        <taxon>Bacilli</taxon>
        <taxon>Bacillales</taxon>
        <taxon>Staphylococcaceae</taxon>
        <taxon>Staphylococcus</taxon>
    </lineage>
</organism>
<feature type="chain" id="PRO_0000157245" description="Probable protein-export membrane protein SecG">
    <location>
        <begin position="1"/>
        <end position="77"/>
    </location>
</feature>
<feature type="transmembrane region" description="Helical" evidence="2">
    <location>
        <begin position="2"/>
        <end position="22"/>
    </location>
</feature>
<feature type="transmembrane region" description="Helical" evidence="2">
    <location>
        <begin position="57"/>
        <end position="77"/>
    </location>
</feature>
<dbReference type="EMBL" id="BA000033">
    <property type="protein sequence ID" value="BAB94605.1"/>
    <property type="molecule type" value="Genomic_DNA"/>
</dbReference>
<dbReference type="RefSeq" id="WP_000556760.1">
    <property type="nucleotide sequence ID" value="NC_003923.1"/>
</dbReference>
<dbReference type="GeneID" id="98345127"/>
<dbReference type="KEGG" id="sam:MW0740"/>
<dbReference type="HOGENOM" id="CLU_094156_6_1_9"/>
<dbReference type="GO" id="GO:0005886">
    <property type="term" value="C:plasma membrane"/>
    <property type="evidence" value="ECO:0007669"/>
    <property type="project" value="UniProtKB-SubCell"/>
</dbReference>
<dbReference type="GO" id="GO:0015450">
    <property type="term" value="F:protein-transporting ATPase activity"/>
    <property type="evidence" value="ECO:0007669"/>
    <property type="project" value="InterPro"/>
</dbReference>
<dbReference type="GO" id="GO:0065002">
    <property type="term" value="P:intracellular protein transmembrane transport"/>
    <property type="evidence" value="ECO:0007669"/>
    <property type="project" value="TreeGrafter"/>
</dbReference>
<dbReference type="GO" id="GO:0009306">
    <property type="term" value="P:protein secretion"/>
    <property type="evidence" value="ECO:0007669"/>
    <property type="project" value="InterPro"/>
</dbReference>
<dbReference type="GO" id="GO:0043952">
    <property type="term" value="P:protein transport by the Sec complex"/>
    <property type="evidence" value="ECO:0007669"/>
    <property type="project" value="TreeGrafter"/>
</dbReference>
<dbReference type="InterPro" id="IPR004692">
    <property type="entry name" value="SecG"/>
</dbReference>
<dbReference type="NCBIfam" id="TIGR00810">
    <property type="entry name" value="secG"/>
    <property type="match status" value="1"/>
</dbReference>
<dbReference type="PANTHER" id="PTHR34182">
    <property type="entry name" value="PROTEIN-EXPORT MEMBRANE PROTEIN SECG"/>
    <property type="match status" value="1"/>
</dbReference>
<dbReference type="PANTHER" id="PTHR34182:SF1">
    <property type="entry name" value="PROTEIN-EXPORT MEMBRANE PROTEIN SECG"/>
    <property type="match status" value="1"/>
</dbReference>
<dbReference type="Pfam" id="PF03840">
    <property type="entry name" value="SecG"/>
    <property type="match status" value="1"/>
</dbReference>
<dbReference type="PRINTS" id="PR01651">
    <property type="entry name" value="SECGEXPORT"/>
</dbReference>